<protein>
    <recommendedName>
        <fullName evidence="3">Sodium channel regulatory subunit beta-1</fullName>
    </recommendedName>
</protein>
<sequence length="218" mass="24707">MGRLLALVVGAALVSSACGGCVEVDSETEAVYGMTFKILCISCKRRSETNAETFTEWTFRQKGTEEFVKILRYENEVLQLEEDERFEGRVVWNGSRGTKDLQDLSIFITNVTYNHSGDYECHVYRLLFFENYEHNTSVVKKIHIEVVDKANRDMASIVSEIMMYVLIVVLTIWLVAEMIYCYKKIAAATETAAQENASEYLAITSESKENCTGVQVAE</sequence>
<accession>A5A6L6</accession>
<name>SCN1B_PANTR</name>
<reference key="1">
    <citation type="journal article" date="2007" name="Gene">
        <title>Mapping of chimpanzee full-length cDNAs onto the human genome unveils large potential divergence of the transcriptome.</title>
        <authorList>
            <person name="Sakate R."/>
            <person name="Suto Y."/>
            <person name="Imanishi T."/>
            <person name="Tanoue T."/>
            <person name="Hida M."/>
            <person name="Hayasaka I."/>
            <person name="Kusuda J."/>
            <person name="Gojobori T."/>
            <person name="Hashimoto K."/>
            <person name="Hirai M."/>
        </authorList>
    </citation>
    <scope>NUCLEOTIDE SEQUENCE [MRNA]</scope>
    <source>
        <tissue>Brain</tissue>
    </source>
</reference>
<proteinExistence type="evidence at transcript level"/>
<dbReference type="EMBL" id="AB222144">
    <property type="protein sequence ID" value="BAF62389.1"/>
    <property type="molecule type" value="mRNA"/>
</dbReference>
<dbReference type="RefSeq" id="NP_001104291.1">
    <property type="nucleotide sequence ID" value="NM_001110821.1"/>
</dbReference>
<dbReference type="SMR" id="A5A6L6"/>
<dbReference type="FunCoup" id="A5A6L6">
    <property type="interactions" value="388"/>
</dbReference>
<dbReference type="STRING" id="9598.ENSPTRP00000089848"/>
<dbReference type="GlyCosmos" id="A5A6L6">
    <property type="glycosylation" value="4 sites, No reported glycans"/>
</dbReference>
<dbReference type="PaxDb" id="9598-ENSPTRP00000048809"/>
<dbReference type="Ensembl" id="ENSPTRT00000020041.4">
    <property type="protein sequence ID" value="ENSPTRP00000048809.2"/>
    <property type="gene ID" value="ENSPTRG00000010825.4"/>
</dbReference>
<dbReference type="GeneID" id="747705"/>
<dbReference type="KEGG" id="ptr:747705"/>
<dbReference type="CTD" id="6324"/>
<dbReference type="VGNC" id="VGNC:7492">
    <property type="gene designation" value="SCN1B"/>
</dbReference>
<dbReference type="eggNOG" id="ENOG502R0UM">
    <property type="taxonomic scope" value="Eukaryota"/>
</dbReference>
<dbReference type="GeneTree" id="ENSGT00390000018560"/>
<dbReference type="HOGENOM" id="CLU_096296_0_0_1"/>
<dbReference type="InParanoid" id="A5A6L6"/>
<dbReference type="OMA" id="VWGGCVE"/>
<dbReference type="TreeFam" id="TF332097"/>
<dbReference type="Proteomes" id="UP000002277">
    <property type="component" value="Chromosome 19"/>
</dbReference>
<dbReference type="Bgee" id="ENSPTRG00000010825">
    <property type="expression patterns" value="Expressed in primary visual cortex and 21 other cell types or tissues"/>
</dbReference>
<dbReference type="GO" id="GO:0030424">
    <property type="term" value="C:axon"/>
    <property type="evidence" value="ECO:0007669"/>
    <property type="project" value="UniProtKB-SubCell"/>
</dbReference>
<dbReference type="GO" id="GO:0043204">
    <property type="term" value="C:perikaryon"/>
    <property type="evidence" value="ECO:0007669"/>
    <property type="project" value="UniProtKB-SubCell"/>
</dbReference>
<dbReference type="GO" id="GO:0005886">
    <property type="term" value="C:plasma membrane"/>
    <property type="evidence" value="ECO:0000250"/>
    <property type="project" value="UniProtKB"/>
</dbReference>
<dbReference type="GO" id="GO:0001518">
    <property type="term" value="C:voltage-gated sodium channel complex"/>
    <property type="evidence" value="ECO:0000250"/>
    <property type="project" value="UniProtKB"/>
</dbReference>
<dbReference type="GO" id="GO:0019871">
    <property type="term" value="F:sodium channel inhibitor activity"/>
    <property type="evidence" value="ECO:0000318"/>
    <property type="project" value="GO_Central"/>
</dbReference>
<dbReference type="GO" id="GO:0017080">
    <property type="term" value="F:sodium channel regulator activity"/>
    <property type="evidence" value="ECO:0000250"/>
    <property type="project" value="UniProtKB"/>
</dbReference>
<dbReference type="GO" id="GO:0044325">
    <property type="term" value="F:transmembrane transporter binding"/>
    <property type="evidence" value="ECO:0000318"/>
    <property type="project" value="GO_Central"/>
</dbReference>
<dbReference type="GO" id="GO:0086002">
    <property type="term" value="P:cardiac muscle cell action potential involved in contraction"/>
    <property type="evidence" value="ECO:0000318"/>
    <property type="project" value="GO_Central"/>
</dbReference>
<dbReference type="GO" id="GO:0086012">
    <property type="term" value="P:membrane depolarization during cardiac muscle cell action potential"/>
    <property type="evidence" value="ECO:0000318"/>
    <property type="project" value="GO_Central"/>
</dbReference>
<dbReference type="GO" id="GO:1905152">
    <property type="term" value="P:positive regulation of voltage-gated sodium channel activity"/>
    <property type="evidence" value="ECO:0000250"/>
    <property type="project" value="UniProtKB"/>
</dbReference>
<dbReference type="GO" id="GO:0086091">
    <property type="term" value="P:regulation of heart rate by cardiac conduction"/>
    <property type="evidence" value="ECO:0000318"/>
    <property type="project" value="GO_Central"/>
</dbReference>
<dbReference type="GO" id="GO:0035725">
    <property type="term" value="P:sodium ion transmembrane transport"/>
    <property type="evidence" value="ECO:0000318"/>
    <property type="project" value="GO_Central"/>
</dbReference>
<dbReference type="FunFam" id="2.60.40.10:FF:000581">
    <property type="entry name" value="sodium channel subunit beta-1"/>
    <property type="match status" value="1"/>
</dbReference>
<dbReference type="Gene3D" id="2.60.40.10">
    <property type="entry name" value="Immunoglobulins"/>
    <property type="match status" value="1"/>
</dbReference>
<dbReference type="InterPro" id="IPR036179">
    <property type="entry name" value="Ig-like_dom_sf"/>
</dbReference>
<dbReference type="InterPro" id="IPR013783">
    <property type="entry name" value="Ig-like_fold"/>
</dbReference>
<dbReference type="InterPro" id="IPR013106">
    <property type="entry name" value="Ig_V-set"/>
</dbReference>
<dbReference type="InterPro" id="IPR027098">
    <property type="entry name" value="Na_channel_b1/b3"/>
</dbReference>
<dbReference type="PANTHER" id="PTHR10546:SF2">
    <property type="entry name" value="SODIUM CHANNEL SUBUNIT BETA-1"/>
    <property type="match status" value="1"/>
</dbReference>
<dbReference type="PANTHER" id="PTHR10546">
    <property type="entry name" value="SODIUM CHANNEL SUBUNIT BETA-1 AND 3"/>
    <property type="match status" value="1"/>
</dbReference>
<dbReference type="Pfam" id="PF07686">
    <property type="entry name" value="V-set"/>
    <property type="match status" value="1"/>
</dbReference>
<dbReference type="SUPFAM" id="SSF48726">
    <property type="entry name" value="Immunoglobulin"/>
    <property type="match status" value="1"/>
</dbReference>
<keyword id="KW-1003">Cell membrane</keyword>
<keyword id="KW-0966">Cell projection</keyword>
<keyword id="KW-1015">Disulfide bond</keyword>
<keyword id="KW-0325">Glycoprotein</keyword>
<keyword id="KW-0393">Immunoglobulin domain</keyword>
<keyword id="KW-0406">Ion transport</keyword>
<keyword id="KW-0472">Membrane</keyword>
<keyword id="KW-1185">Reference proteome</keyword>
<keyword id="KW-0732">Signal</keyword>
<keyword id="KW-0915">Sodium</keyword>
<keyword id="KW-0739">Sodium transport</keyword>
<keyword id="KW-0812">Transmembrane</keyword>
<keyword id="KW-1133">Transmembrane helix</keyword>
<keyword id="KW-0813">Transport</keyword>
<gene>
    <name evidence="3" type="primary">SCN1B</name>
</gene>
<organism>
    <name type="scientific">Pan troglodytes</name>
    <name type="common">Chimpanzee</name>
    <dbReference type="NCBI Taxonomy" id="9598"/>
    <lineage>
        <taxon>Eukaryota</taxon>
        <taxon>Metazoa</taxon>
        <taxon>Chordata</taxon>
        <taxon>Craniata</taxon>
        <taxon>Vertebrata</taxon>
        <taxon>Euteleostomi</taxon>
        <taxon>Mammalia</taxon>
        <taxon>Eutheria</taxon>
        <taxon>Euarchontoglires</taxon>
        <taxon>Primates</taxon>
        <taxon>Haplorrhini</taxon>
        <taxon>Catarrhini</taxon>
        <taxon>Hominidae</taxon>
        <taxon>Pan</taxon>
    </lineage>
</organism>
<feature type="signal peptide" evidence="2">
    <location>
        <begin position="1"/>
        <end position="18"/>
    </location>
</feature>
<feature type="chain" id="PRO_0000309744" description="Sodium channel regulatory subunit beta-1">
    <location>
        <begin position="19"/>
        <end position="218"/>
    </location>
</feature>
<feature type="topological domain" description="Extracellular" evidence="5">
    <location>
        <begin position="19"/>
        <end position="157"/>
    </location>
</feature>
<feature type="transmembrane region" description="Helical" evidence="3">
    <location>
        <begin position="158"/>
        <end position="179"/>
    </location>
</feature>
<feature type="topological domain" description="Cytoplasmic" evidence="5">
    <location>
        <begin position="180"/>
        <end position="218"/>
    </location>
</feature>
<feature type="domain" description="Ig-like C2-type">
    <location>
        <begin position="22"/>
        <end position="150"/>
    </location>
</feature>
<feature type="glycosylation site" description="N-linked (GlcNAc...) asparagine" evidence="4">
    <location>
        <position position="93"/>
    </location>
</feature>
<feature type="glycosylation site" description="N-linked (GlcNAc...) asparagine" evidence="4">
    <location>
        <position position="110"/>
    </location>
</feature>
<feature type="glycosylation site" description="N-linked (GlcNAc...) asparagine" evidence="4">
    <location>
        <position position="114"/>
    </location>
</feature>
<feature type="glycosylation site" description="N-linked (GlcNAc...) asparagine" evidence="4">
    <location>
        <position position="135"/>
    </location>
</feature>
<feature type="disulfide bond" evidence="3">
    <location>
        <begin position="21"/>
        <end position="43"/>
    </location>
</feature>
<feature type="disulfide bond" evidence="3">
    <location>
        <begin position="40"/>
        <end position="121"/>
    </location>
</feature>
<evidence type="ECO:0000250" key="1">
    <source>
        <dbReference type="UniProtKB" id="P97952"/>
    </source>
</evidence>
<evidence type="ECO:0000250" key="2">
    <source>
        <dbReference type="UniProtKB" id="Q00954"/>
    </source>
</evidence>
<evidence type="ECO:0000250" key="3">
    <source>
        <dbReference type="UniProtKB" id="Q07699"/>
    </source>
</evidence>
<evidence type="ECO:0000255" key="4"/>
<evidence type="ECO:0000305" key="5"/>
<comment type="function">
    <text evidence="3">Regulatory subunit of multiple voltage-gated sodium (Nav) channels directly mediating the depolarization of excitable membranes. Navs, also called VGSCs (voltage-gated sodium channels) or VDSCs (voltage-dependent sodium channels), operate by switching between closed and open conformations depending on the voltage difference across the membrane. In the open conformation they allow Na(+) ions to selectively pass through the pore, along their electrochemical gradient. The influx of Na+ ions provokes membrane depolarization, initiating the propagation of electrical signals throughout cells and tissues. The accessory beta subunits participate in localization and functional modulation of the Nav channels. Modulates the activity of SCN1A/Nav1.1, SCN2A/Nav1.2, SCN3A/Nav1.3, SCN4A/Nav1.4, SCN5A/Nav1.5, SCN8A/Nav1.6, SCN9A/Nav1.7 and SCN10A/Nav1.8.</text>
</comment>
<comment type="subunit">
    <text evidence="1 2 3">A voltage-gated sodium (Nav) channel consists of an ion-conducting pore-forming alpha subunit functional on its own that is regulated by one or more beta subunits. Interacts with SCN1A; regulatory subunit of SCN1A/Nav1.1. Interacts with SCN3A; regulatory subunit of SCN3A/Nav1.3. Interacts with SCN4A; regulatory subunit of SCN4A/Nav1.4. Interacts with SCN5A; regulatory subunit of SCN5A/Nav1.5. Interacts with SCN8A; regulatory subunit of SCN8A/Nav1.6 (By similarity). Interacts with SCN9A; regulatory subunit of SCN9A/Nav1.7 (By similarity). Interacts with SCN10A; regulatory subunit of SCN10A/Nav1.8 (By similarity). Interacts with NFASC (By similarity). Interacts with TMEM65 (By similarity).</text>
</comment>
<comment type="subcellular location">
    <subcellularLocation>
        <location evidence="1">Cell membrane</location>
        <topology evidence="3">Single-pass type I membrane protein</topology>
    </subcellularLocation>
    <subcellularLocation>
        <location evidence="1">Perikaryon</location>
    </subcellularLocation>
    <subcellularLocation>
        <location evidence="1">Cell projection</location>
    </subcellularLocation>
    <subcellularLocation>
        <location evidence="2">Cell projection</location>
        <location evidence="2">Axon</location>
    </subcellularLocation>
    <text evidence="1">Detected at nodes of Ranvier on the sciatic nerve.</text>
</comment>
<comment type="similarity">
    <text evidence="5">Belongs to the sodium channel auxiliary subunit SCN1B (TC 8.A.17) family.</text>
</comment>